<gene>
    <name evidence="1" type="primary">ruvC</name>
    <name type="ordered locus">Bind_0004</name>
</gene>
<comment type="function">
    <text evidence="1">The RuvA-RuvB-RuvC complex processes Holliday junction (HJ) DNA during genetic recombination and DNA repair. Endonuclease that resolves HJ intermediates. Cleaves cruciform DNA by making single-stranded nicks across the HJ at symmetrical positions within the homologous arms, yielding a 5'-phosphate and a 3'-hydroxyl group; requires a central core of homology in the junction. The consensus cleavage sequence is 5'-(A/T)TT(C/G)-3'. Cleavage occurs on the 3'-side of the TT dinucleotide at the point of strand exchange. HJ branch migration catalyzed by RuvA-RuvB allows RuvC to scan DNA until it finds its consensus sequence, where it cleaves and resolves the cruciform DNA.</text>
</comment>
<comment type="catalytic activity">
    <reaction evidence="1">
        <text>Endonucleolytic cleavage at a junction such as a reciprocal single-stranded crossover between two homologous DNA duplexes (Holliday junction).</text>
        <dbReference type="EC" id="3.1.21.10"/>
    </reaction>
</comment>
<comment type="cofactor">
    <cofactor evidence="1">
        <name>Mg(2+)</name>
        <dbReference type="ChEBI" id="CHEBI:18420"/>
    </cofactor>
    <text evidence="1">Binds 2 Mg(2+) ion per subunit.</text>
</comment>
<comment type="subunit">
    <text evidence="1">Homodimer which binds Holliday junction (HJ) DNA. The HJ becomes 2-fold symmetrical on binding to RuvC with unstacked arms; it has a different conformation from HJ DNA in complex with RuvA. In the full resolvosome a probable DNA-RuvA(4)-RuvB(12)-RuvC(2) complex forms which resolves the HJ.</text>
</comment>
<comment type="subcellular location">
    <subcellularLocation>
        <location evidence="1">Cytoplasm</location>
    </subcellularLocation>
</comment>
<comment type="similarity">
    <text evidence="1">Belongs to the RuvC family.</text>
</comment>
<feature type="chain" id="PRO_1000195235" description="Crossover junction endodeoxyribonuclease RuvC">
    <location>
        <begin position="1"/>
        <end position="175"/>
    </location>
</feature>
<feature type="active site" evidence="1">
    <location>
        <position position="12"/>
    </location>
</feature>
<feature type="active site" evidence="1">
    <location>
        <position position="72"/>
    </location>
</feature>
<feature type="active site" evidence="1">
    <location>
        <position position="144"/>
    </location>
</feature>
<feature type="binding site" evidence="1">
    <location>
        <position position="12"/>
    </location>
    <ligand>
        <name>Mg(2+)</name>
        <dbReference type="ChEBI" id="CHEBI:18420"/>
        <label>1</label>
    </ligand>
</feature>
<feature type="binding site" evidence="1">
    <location>
        <position position="72"/>
    </location>
    <ligand>
        <name>Mg(2+)</name>
        <dbReference type="ChEBI" id="CHEBI:18420"/>
        <label>2</label>
    </ligand>
</feature>
<feature type="binding site" evidence="1">
    <location>
        <position position="144"/>
    </location>
    <ligand>
        <name>Mg(2+)</name>
        <dbReference type="ChEBI" id="CHEBI:18420"/>
        <label>1</label>
    </ligand>
</feature>
<reference key="1">
    <citation type="journal article" date="2010" name="J. Bacteriol.">
        <title>Complete genome sequence of Beijerinckia indica subsp. indica.</title>
        <authorList>
            <person name="Tamas I."/>
            <person name="Dedysh S.N."/>
            <person name="Liesack W."/>
            <person name="Stott M.B."/>
            <person name="Alam M."/>
            <person name="Murrell J.C."/>
            <person name="Dunfield P.F."/>
        </authorList>
    </citation>
    <scope>NUCLEOTIDE SEQUENCE [LARGE SCALE GENOMIC DNA]</scope>
    <source>
        <strain>ATCC 9039 / DSM 1715 / NCIMB 8712</strain>
    </source>
</reference>
<protein>
    <recommendedName>
        <fullName evidence="1">Crossover junction endodeoxyribonuclease RuvC</fullName>
        <ecNumber evidence="1">3.1.21.10</ecNumber>
    </recommendedName>
    <alternativeName>
        <fullName evidence="1">Holliday junction nuclease RuvC</fullName>
    </alternativeName>
    <alternativeName>
        <fullName evidence="1">Holliday junction resolvase RuvC</fullName>
    </alternativeName>
</protein>
<name>RUVC_BEII9</name>
<organism>
    <name type="scientific">Beijerinckia indica subsp. indica (strain ATCC 9039 / DSM 1715 / NCIMB 8712)</name>
    <dbReference type="NCBI Taxonomy" id="395963"/>
    <lineage>
        <taxon>Bacteria</taxon>
        <taxon>Pseudomonadati</taxon>
        <taxon>Pseudomonadota</taxon>
        <taxon>Alphaproteobacteria</taxon>
        <taxon>Hyphomicrobiales</taxon>
        <taxon>Beijerinckiaceae</taxon>
        <taxon>Beijerinckia</taxon>
    </lineage>
</organism>
<evidence type="ECO:0000255" key="1">
    <source>
        <dbReference type="HAMAP-Rule" id="MF_00034"/>
    </source>
</evidence>
<keyword id="KW-0963">Cytoplasm</keyword>
<keyword id="KW-0227">DNA damage</keyword>
<keyword id="KW-0233">DNA recombination</keyword>
<keyword id="KW-0234">DNA repair</keyword>
<keyword id="KW-0238">DNA-binding</keyword>
<keyword id="KW-0255">Endonuclease</keyword>
<keyword id="KW-0378">Hydrolase</keyword>
<keyword id="KW-0460">Magnesium</keyword>
<keyword id="KW-0479">Metal-binding</keyword>
<keyword id="KW-0540">Nuclease</keyword>
<keyword id="KW-1185">Reference proteome</keyword>
<sequence>MMPPRLRILGIDPGLRNMGWGIVELLGSNLTYVASGVVHSDGKGELAHRLKDLHVGLAGVIDAYTPHEAAIEETFVNRDPQSTLKLGQARGIALVVPALADLAVAEYAANLIKKTVTGNGHAEKQQVAMMVKILLPKSDAGSADAVDALAVAITHAQLRRNPAALKSQAMIGQGR</sequence>
<dbReference type="EC" id="3.1.21.10" evidence="1"/>
<dbReference type="EMBL" id="CP001016">
    <property type="protein sequence ID" value="ACB93663.1"/>
    <property type="molecule type" value="Genomic_DNA"/>
</dbReference>
<dbReference type="RefSeq" id="WP_012383021.1">
    <property type="nucleotide sequence ID" value="NC_010581.1"/>
</dbReference>
<dbReference type="SMR" id="B2IAW3"/>
<dbReference type="STRING" id="395963.Bind_0004"/>
<dbReference type="KEGG" id="bid:Bind_0004"/>
<dbReference type="eggNOG" id="COG0817">
    <property type="taxonomic scope" value="Bacteria"/>
</dbReference>
<dbReference type="HOGENOM" id="CLU_091257_1_0_5"/>
<dbReference type="OrthoDB" id="9805499at2"/>
<dbReference type="Proteomes" id="UP000001695">
    <property type="component" value="Chromosome"/>
</dbReference>
<dbReference type="GO" id="GO:0005737">
    <property type="term" value="C:cytoplasm"/>
    <property type="evidence" value="ECO:0007669"/>
    <property type="project" value="UniProtKB-SubCell"/>
</dbReference>
<dbReference type="GO" id="GO:0048476">
    <property type="term" value="C:Holliday junction resolvase complex"/>
    <property type="evidence" value="ECO:0007669"/>
    <property type="project" value="UniProtKB-UniRule"/>
</dbReference>
<dbReference type="GO" id="GO:0008821">
    <property type="term" value="F:crossover junction DNA endonuclease activity"/>
    <property type="evidence" value="ECO:0007669"/>
    <property type="project" value="UniProtKB-UniRule"/>
</dbReference>
<dbReference type="GO" id="GO:0003677">
    <property type="term" value="F:DNA binding"/>
    <property type="evidence" value="ECO:0007669"/>
    <property type="project" value="UniProtKB-KW"/>
</dbReference>
<dbReference type="GO" id="GO:0000287">
    <property type="term" value="F:magnesium ion binding"/>
    <property type="evidence" value="ECO:0007669"/>
    <property type="project" value="UniProtKB-UniRule"/>
</dbReference>
<dbReference type="GO" id="GO:0006310">
    <property type="term" value="P:DNA recombination"/>
    <property type="evidence" value="ECO:0007669"/>
    <property type="project" value="UniProtKB-UniRule"/>
</dbReference>
<dbReference type="GO" id="GO:0006281">
    <property type="term" value="P:DNA repair"/>
    <property type="evidence" value="ECO:0007669"/>
    <property type="project" value="UniProtKB-UniRule"/>
</dbReference>
<dbReference type="CDD" id="cd16962">
    <property type="entry name" value="RuvC"/>
    <property type="match status" value="1"/>
</dbReference>
<dbReference type="FunFam" id="3.30.420.10:FF:000002">
    <property type="entry name" value="Crossover junction endodeoxyribonuclease RuvC"/>
    <property type="match status" value="1"/>
</dbReference>
<dbReference type="Gene3D" id="3.30.420.10">
    <property type="entry name" value="Ribonuclease H-like superfamily/Ribonuclease H"/>
    <property type="match status" value="1"/>
</dbReference>
<dbReference type="HAMAP" id="MF_00034">
    <property type="entry name" value="RuvC"/>
    <property type="match status" value="1"/>
</dbReference>
<dbReference type="InterPro" id="IPR012337">
    <property type="entry name" value="RNaseH-like_sf"/>
</dbReference>
<dbReference type="InterPro" id="IPR036397">
    <property type="entry name" value="RNaseH_sf"/>
</dbReference>
<dbReference type="InterPro" id="IPR020563">
    <property type="entry name" value="X-over_junc_endoDNase_Mg_BS"/>
</dbReference>
<dbReference type="InterPro" id="IPR002176">
    <property type="entry name" value="X-over_junc_endoDNase_RuvC"/>
</dbReference>
<dbReference type="NCBIfam" id="TIGR00228">
    <property type="entry name" value="ruvC"/>
    <property type="match status" value="1"/>
</dbReference>
<dbReference type="PANTHER" id="PTHR30194">
    <property type="entry name" value="CROSSOVER JUNCTION ENDODEOXYRIBONUCLEASE RUVC"/>
    <property type="match status" value="1"/>
</dbReference>
<dbReference type="PANTHER" id="PTHR30194:SF3">
    <property type="entry name" value="CROSSOVER JUNCTION ENDODEOXYRIBONUCLEASE RUVC"/>
    <property type="match status" value="1"/>
</dbReference>
<dbReference type="Pfam" id="PF02075">
    <property type="entry name" value="RuvC"/>
    <property type="match status" value="1"/>
</dbReference>
<dbReference type="PRINTS" id="PR00696">
    <property type="entry name" value="RSOLVASERUVC"/>
</dbReference>
<dbReference type="SUPFAM" id="SSF53098">
    <property type="entry name" value="Ribonuclease H-like"/>
    <property type="match status" value="1"/>
</dbReference>
<dbReference type="PROSITE" id="PS01321">
    <property type="entry name" value="RUVC"/>
    <property type="match status" value="1"/>
</dbReference>
<accession>B2IAW3</accession>
<proteinExistence type="inferred from homology"/>